<name>XGPT_ECOSE</name>
<protein>
    <recommendedName>
        <fullName evidence="1">Xanthine-guanine phosphoribosyltransferase</fullName>
        <shortName evidence="1">XGPRT</shortName>
        <ecNumber evidence="1">2.4.2.-</ecNumber>
        <ecNumber evidence="1">2.4.2.22</ecNumber>
    </recommendedName>
    <alternativeName>
        <fullName evidence="1">Xanthine phosphoribosyltransferase</fullName>
    </alternativeName>
</protein>
<accession>B6I018</accession>
<comment type="function">
    <text evidence="1">Purine salvage pathway enzyme that catalyzes the transfer of the ribosyl-5-phosphate group from 5-phospho-alpha-D-ribose 1-diphosphate (PRPP) to the N9 position of the 6-oxopurines guanine and xanthine to form the corresponding ribonucleotides GMP (guanosine 5'-monophosphate) and XMP (xanthosine 5'-monophosphate), with the release of PPi. To a lesser extent, also acts on hypoxanthine.</text>
</comment>
<comment type="catalytic activity">
    <reaction evidence="1">
        <text>GMP + diphosphate = guanine + 5-phospho-alpha-D-ribose 1-diphosphate</text>
        <dbReference type="Rhea" id="RHEA:25424"/>
        <dbReference type="ChEBI" id="CHEBI:16235"/>
        <dbReference type="ChEBI" id="CHEBI:33019"/>
        <dbReference type="ChEBI" id="CHEBI:58017"/>
        <dbReference type="ChEBI" id="CHEBI:58115"/>
    </reaction>
    <physiologicalReaction direction="right-to-left" evidence="1">
        <dbReference type="Rhea" id="RHEA:25426"/>
    </physiologicalReaction>
</comment>
<comment type="catalytic activity">
    <reaction evidence="1">
        <text>XMP + diphosphate = xanthine + 5-phospho-alpha-D-ribose 1-diphosphate</text>
        <dbReference type="Rhea" id="RHEA:10800"/>
        <dbReference type="ChEBI" id="CHEBI:17712"/>
        <dbReference type="ChEBI" id="CHEBI:33019"/>
        <dbReference type="ChEBI" id="CHEBI:57464"/>
        <dbReference type="ChEBI" id="CHEBI:58017"/>
        <dbReference type="EC" id="2.4.2.22"/>
    </reaction>
    <physiologicalReaction direction="right-to-left" evidence="1">
        <dbReference type="Rhea" id="RHEA:10802"/>
    </physiologicalReaction>
</comment>
<comment type="catalytic activity">
    <reaction evidence="1">
        <text>IMP + diphosphate = hypoxanthine + 5-phospho-alpha-D-ribose 1-diphosphate</text>
        <dbReference type="Rhea" id="RHEA:17973"/>
        <dbReference type="ChEBI" id="CHEBI:17368"/>
        <dbReference type="ChEBI" id="CHEBI:33019"/>
        <dbReference type="ChEBI" id="CHEBI:58017"/>
        <dbReference type="ChEBI" id="CHEBI:58053"/>
    </reaction>
    <physiologicalReaction direction="right-to-left" evidence="1">
        <dbReference type="Rhea" id="RHEA:17975"/>
    </physiologicalReaction>
</comment>
<comment type="cofactor">
    <cofactor evidence="1">
        <name>Mg(2+)</name>
        <dbReference type="ChEBI" id="CHEBI:18420"/>
    </cofactor>
</comment>
<comment type="pathway">
    <text evidence="1">Purine metabolism; GMP biosynthesis via salvage pathway; GMP from guanine: step 1/1.</text>
</comment>
<comment type="pathway">
    <text evidence="1">Purine metabolism; XMP biosynthesis via salvage pathway; XMP from xanthine: step 1/1.</text>
</comment>
<comment type="subunit">
    <text evidence="1">Homotetramer.</text>
</comment>
<comment type="subcellular location">
    <subcellularLocation>
        <location evidence="1">Cell inner membrane</location>
        <topology evidence="1">Peripheral membrane protein</topology>
    </subcellularLocation>
</comment>
<comment type="similarity">
    <text evidence="1">Belongs to the purine/pyrimidine phosphoribosyltransferase family. XGPT subfamily.</text>
</comment>
<proteinExistence type="inferred from homology"/>
<feature type="chain" id="PRO_1000188746" description="Xanthine-guanine phosphoribosyltransferase">
    <location>
        <begin position="1"/>
        <end position="152"/>
    </location>
</feature>
<feature type="binding site" evidence="1">
    <location>
        <begin position="37"/>
        <end position="38"/>
    </location>
    <ligand>
        <name>5-phospho-alpha-D-ribose 1-diphosphate</name>
        <dbReference type="ChEBI" id="CHEBI:58017"/>
    </ligand>
</feature>
<feature type="binding site" evidence="1">
    <location>
        <position position="69"/>
    </location>
    <ligand>
        <name>5-phospho-alpha-D-ribose 1-diphosphate</name>
        <dbReference type="ChEBI" id="CHEBI:58017"/>
    </ligand>
</feature>
<feature type="binding site" evidence="1">
    <location>
        <position position="69"/>
    </location>
    <ligand>
        <name>GMP</name>
        <dbReference type="ChEBI" id="CHEBI:58115"/>
    </ligand>
</feature>
<feature type="binding site" evidence="1">
    <location>
        <begin position="88"/>
        <end position="96"/>
    </location>
    <ligand>
        <name>5-phospho-alpha-D-ribose 1-diphosphate</name>
        <dbReference type="ChEBI" id="CHEBI:58017"/>
    </ligand>
</feature>
<feature type="binding site" evidence="1">
    <location>
        <position position="89"/>
    </location>
    <ligand>
        <name>Mg(2+)</name>
        <dbReference type="ChEBI" id="CHEBI:18420"/>
    </ligand>
</feature>
<feature type="binding site" evidence="1">
    <location>
        <begin position="92"/>
        <end position="96"/>
    </location>
    <ligand>
        <name>GMP</name>
        <dbReference type="ChEBI" id="CHEBI:58115"/>
    </ligand>
</feature>
<feature type="binding site" evidence="1">
    <location>
        <position position="92"/>
    </location>
    <ligand>
        <name>guanine</name>
        <dbReference type="ChEBI" id="CHEBI:16235"/>
    </ligand>
</feature>
<feature type="binding site" evidence="1">
    <location>
        <position position="92"/>
    </location>
    <ligand>
        <name>xanthine</name>
        <dbReference type="ChEBI" id="CHEBI:17712"/>
    </ligand>
</feature>
<feature type="binding site" evidence="1">
    <location>
        <begin position="134"/>
        <end position="135"/>
    </location>
    <ligand>
        <name>GMP</name>
        <dbReference type="ChEBI" id="CHEBI:58115"/>
    </ligand>
</feature>
<feature type="binding site" evidence="1">
    <location>
        <position position="135"/>
    </location>
    <ligand>
        <name>guanine</name>
        <dbReference type="ChEBI" id="CHEBI:16235"/>
    </ligand>
</feature>
<feature type="binding site" evidence="1">
    <location>
        <position position="135"/>
    </location>
    <ligand>
        <name>xanthine</name>
        <dbReference type="ChEBI" id="CHEBI:17712"/>
    </ligand>
</feature>
<keyword id="KW-0997">Cell inner membrane</keyword>
<keyword id="KW-1003">Cell membrane</keyword>
<keyword id="KW-0328">Glycosyltransferase</keyword>
<keyword id="KW-0460">Magnesium</keyword>
<keyword id="KW-0472">Membrane</keyword>
<keyword id="KW-0479">Metal-binding</keyword>
<keyword id="KW-0660">Purine salvage</keyword>
<keyword id="KW-0808">Transferase</keyword>
<evidence type="ECO:0000255" key="1">
    <source>
        <dbReference type="HAMAP-Rule" id="MF_01903"/>
    </source>
</evidence>
<dbReference type="EC" id="2.4.2.-" evidence="1"/>
<dbReference type="EC" id="2.4.2.22" evidence="1"/>
<dbReference type="EMBL" id="AP009240">
    <property type="protein sequence ID" value="BAG75782.1"/>
    <property type="molecule type" value="Genomic_DNA"/>
</dbReference>
<dbReference type="RefSeq" id="WP_001291990.1">
    <property type="nucleotide sequence ID" value="NC_011415.1"/>
</dbReference>
<dbReference type="SMR" id="B6I018"/>
<dbReference type="GeneID" id="93777155"/>
<dbReference type="KEGG" id="ecy:ECSE_0258"/>
<dbReference type="HOGENOM" id="CLU_080904_3_0_6"/>
<dbReference type="UniPathway" id="UPA00602">
    <property type="reaction ID" value="UER00658"/>
</dbReference>
<dbReference type="UniPathway" id="UPA00909">
    <property type="reaction ID" value="UER00887"/>
</dbReference>
<dbReference type="Proteomes" id="UP000008199">
    <property type="component" value="Chromosome"/>
</dbReference>
<dbReference type="GO" id="GO:0005829">
    <property type="term" value="C:cytosol"/>
    <property type="evidence" value="ECO:0007669"/>
    <property type="project" value="TreeGrafter"/>
</dbReference>
<dbReference type="GO" id="GO:0005886">
    <property type="term" value="C:plasma membrane"/>
    <property type="evidence" value="ECO:0007669"/>
    <property type="project" value="UniProtKB-SubCell"/>
</dbReference>
<dbReference type="GO" id="GO:0052657">
    <property type="term" value="F:guanine phosphoribosyltransferase activity"/>
    <property type="evidence" value="ECO:0007669"/>
    <property type="project" value="RHEA"/>
</dbReference>
<dbReference type="GO" id="GO:0004422">
    <property type="term" value="F:hypoxanthine phosphoribosyltransferase activity"/>
    <property type="evidence" value="ECO:0007669"/>
    <property type="project" value="RHEA"/>
</dbReference>
<dbReference type="GO" id="GO:0000287">
    <property type="term" value="F:magnesium ion binding"/>
    <property type="evidence" value="ECO:0007669"/>
    <property type="project" value="UniProtKB-UniRule"/>
</dbReference>
<dbReference type="GO" id="GO:0000310">
    <property type="term" value="F:xanthine phosphoribosyltransferase activity"/>
    <property type="evidence" value="ECO:0007669"/>
    <property type="project" value="UniProtKB-UniRule"/>
</dbReference>
<dbReference type="GO" id="GO:0032263">
    <property type="term" value="P:GMP salvage"/>
    <property type="evidence" value="ECO:0007669"/>
    <property type="project" value="UniProtKB-UniRule"/>
</dbReference>
<dbReference type="GO" id="GO:0032264">
    <property type="term" value="P:IMP salvage"/>
    <property type="evidence" value="ECO:0007669"/>
    <property type="project" value="TreeGrafter"/>
</dbReference>
<dbReference type="GO" id="GO:0006166">
    <property type="term" value="P:purine ribonucleoside salvage"/>
    <property type="evidence" value="ECO:0007669"/>
    <property type="project" value="UniProtKB-KW"/>
</dbReference>
<dbReference type="GO" id="GO:0032265">
    <property type="term" value="P:XMP salvage"/>
    <property type="evidence" value="ECO:0007669"/>
    <property type="project" value="UniProtKB-UniRule"/>
</dbReference>
<dbReference type="CDD" id="cd06223">
    <property type="entry name" value="PRTases_typeI"/>
    <property type="match status" value="1"/>
</dbReference>
<dbReference type="FunFam" id="3.40.50.2020:FF:000009">
    <property type="entry name" value="Xanthine phosphoribosyltransferase"/>
    <property type="match status" value="1"/>
</dbReference>
<dbReference type="Gene3D" id="3.40.50.2020">
    <property type="match status" value="1"/>
</dbReference>
<dbReference type="HAMAP" id="MF_01903">
    <property type="entry name" value="XGPRT"/>
    <property type="match status" value="1"/>
</dbReference>
<dbReference type="InterPro" id="IPR000836">
    <property type="entry name" value="PRibTrfase_dom"/>
</dbReference>
<dbReference type="InterPro" id="IPR029057">
    <property type="entry name" value="PRTase-like"/>
</dbReference>
<dbReference type="InterPro" id="IPR023747">
    <property type="entry name" value="Xanthine_Guanine_PRibTrfase"/>
</dbReference>
<dbReference type="NCBIfam" id="NF006613">
    <property type="entry name" value="PRK09177.1"/>
    <property type="match status" value="1"/>
</dbReference>
<dbReference type="PANTHER" id="PTHR39563">
    <property type="entry name" value="XANTHINE PHOSPHORIBOSYLTRANSFERASE"/>
    <property type="match status" value="1"/>
</dbReference>
<dbReference type="PANTHER" id="PTHR39563:SF1">
    <property type="entry name" value="XANTHINE-GUANINE PHOSPHORIBOSYLTRANSFERASE"/>
    <property type="match status" value="1"/>
</dbReference>
<dbReference type="Pfam" id="PF00156">
    <property type="entry name" value="Pribosyltran"/>
    <property type="match status" value="1"/>
</dbReference>
<dbReference type="SUPFAM" id="SSF53271">
    <property type="entry name" value="PRTase-like"/>
    <property type="match status" value="1"/>
</dbReference>
<dbReference type="PROSITE" id="PS00103">
    <property type="entry name" value="PUR_PYR_PR_TRANSFER"/>
    <property type="match status" value="1"/>
</dbReference>
<organism>
    <name type="scientific">Escherichia coli (strain SE11)</name>
    <dbReference type="NCBI Taxonomy" id="409438"/>
    <lineage>
        <taxon>Bacteria</taxon>
        <taxon>Pseudomonadati</taxon>
        <taxon>Pseudomonadota</taxon>
        <taxon>Gammaproteobacteria</taxon>
        <taxon>Enterobacterales</taxon>
        <taxon>Enterobacteriaceae</taxon>
        <taxon>Escherichia</taxon>
    </lineage>
</organism>
<reference key="1">
    <citation type="journal article" date="2008" name="DNA Res.">
        <title>Complete genome sequence and comparative analysis of the wild-type commensal Escherichia coli strain SE11 isolated from a healthy adult.</title>
        <authorList>
            <person name="Oshima K."/>
            <person name="Toh H."/>
            <person name="Ogura Y."/>
            <person name="Sasamoto H."/>
            <person name="Morita H."/>
            <person name="Park S.-H."/>
            <person name="Ooka T."/>
            <person name="Iyoda S."/>
            <person name="Taylor T.D."/>
            <person name="Hayashi T."/>
            <person name="Itoh K."/>
            <person name="Hattori M."/>
        </authorList>
    </citation>
    <scope>NUCLEOTIDE SEQUENCE [LARGE SCALE GENOMIC DNA]</scope>
    <source>
        <strain>SE11</strain>
    </source>
</reference>
<gene>
    <name evidence="1" type="primary">gpt</name>
    <name type="ordered locus">ECSE_0258</name>
</gene>
<sequence>MSEKYIVTWDMLQIHARKLASRLMPSEQWKGIIAVSRGGLVPGALLARELGIRHVDTVCISSYDHDNQRELKVLKRAEGDGEGFIVIDDLVDTGGTAVAIREMYPKAHFVTIFAKPAGRPLVDDYVVDIPQDTWIEQPWDMGVVFVPPISGR</sequence>